<protein>
    <recommendedName>
        <fullName evidence="1">Glycogen synthase</fullName>
        <ecNumber evidence="1">2.4.1.21</ecNumber>
    </recommendedName>
    <alternativeName>
        <fullName evidence="1">Starch [bacterial glycogen] synthase</fullName>
    </alternativeName>
</protein>
<comment type="function">
    <text evidence="1">Synthesizes alpha-1,4-glucan chains using ADP-glucose.</text>
</comment>
<comment type="catalytic activity">
    <reaction evidence="1">
        <text>[(1-&gt;4)-alpha-D-glucosyl](n) + ADP-alpha-D-glucose = [(1-&gt;4)-alpha-D-glucosyl](n+1) + ADP + H(+)</text>
        <dbReference type="Rhea" id="RHEA:18189"/>
        <dbReference type="Rhea" id="RHEA-COMP:9584"/>
        <dbReference type="Rhea" id="RHEA-COMP:9587"/>
        <dbReference type="ChEBI" id="CHEBI:15378"/>
        <dbReference type="ChEBI" id="CHEBI:15444"/>
        <dbReference type="ChEBI" id="CHEBI:57498"/>
        <dbReference type="ChEBI" id="CHEBI:456216"/>
        <dbReference type="EC" id="2.4.1.21"/>
    </reaction>
</comment>
<comment type="pathway">
    <text evidence="1">Glycan biosynthesis; glycogen biosynthesis.</text>
</comment>
<comment type="similarity">
    <text evidence="1">Belongs to the glycosyltransferase 1 family. Bacterial/plant glycogen synthase subfamily.</text>
</comment>
<feature type="chain" id="PRO_0000188633" description="Glycogen synthase">
    <location>
        <begin position="1"/>
        <end position="519"/>
    </location>
</feature>
<feature type="region of interest" description="Disordered" evidence="2">
    <location>
        <begin position="1"/>
        <end position="40"/>
    </location>
</feature>
<feature type="compositionally biased region" description="Basic and acidic residues" evidence="2">
    <location>
        <begin position="8"/>
        <end position="21"/>
    </location>
</feature>
<feature type="binding site" evidence="1">
    <location>
        <position position="57"/>
    </location>
    <ligand>
        <name>ADP-alpha-D-glucose</name>
        <dbReference type="ChEBI" id="CHEBI:57498"/>
    </ligand>
</feature>
<sequence length="519" mass="57191">MISAAVEPHVDAFKPDNREPLTPDFATTGKAPGAQRQHNPNKRKILFVTSEIADLVKTGGLGDVSAALPRALAHLHDVRVLIPGYRQVMESDNPIHIVGELGGHAALPPCKIGRMDMADGLVIYVLICPELYQRDGTPYGANNGRDWPDNHIRFARLGLAAAEIAAGEGKIHWTPEVVHAHDWPAGLAPAYMHWRGLNTPTLFTIHNLAYQGVYSRGCSPELAIPEHAMQQEGMEFYGKLSFLKAGLAYSSHITTVSATYAREITTPEFGCGLDGFLASKAQQGLLGGIPNGIDESWDSATDKHLQHNFSINDWEGKARNTQEVRELFGLDDSEGPLFAVVSRLVYQKGLDLTLGVADYIVEQGGQIAIIGRGEPEEEQAMRELALRHPGRIGVRIGFNETDARRMFAGSDFLLMPSRYEPCGLSQMYAQRFGSLPVARNTGGLADTIECGVTGFLFNESTVESYREALSRAFYVYGKKDLLNAMRCLSMTQPFNWCQAVEPYARLYEDLVKQTQLSHY</sequence>
<keyword id="KW-0320">Glycogen biosynthesis</keyword>
<keyword id="KW-0328">Glycosyltransferase</keyword>
<keyword id="KW-1185">Reference proteome</keyword>
<keyword id="KW-0808">Transferase</keyword>
<reference key="1">
    <citation type="journal article" date="2002" name="Environ. Microbiol.">
        <title>Complete genome sequence and comparative analysis of the metabolically versatile Pseudomonas putida KT2440.</title>
        <authorList>
            <person name="Nelson K.E."/>
            <person name="Weinel C."/>
            <person name="Paulsen I.T."/>
            <person name="Dodson R.J."/>
            <person name="Hilbert H."/>
            <person name="Martins dos Santos V.A.P."/>
            <person name="Fouts D.E."/>
            <person name="Gill S.R."/>
            <person name="Pop M."/>
            <person name="Holmes M."/>
            <person name="Brinkac L.M."/>
            <person name="Beanan M.J."/>
            <person name="DeBoy R.T."/>
            <person name="Daugherty S.C."/>
            <person name="Kolonay J.F."/>
            <person name="Madupu R."/>
            <person name="Nelson W.C."/>
            <person name="White O."/>
            <person name="Peterson J.D."/>
            <person name="Khouri H.M."/>
            <person name="Hance I."/>
            <person name="Chris Lee P."/>
            <person name="Holtzapple E.K."/>
            <person name="Scanlan D."/>
            <person name="Tran K."/>
            <person name="Moazzez A."/>
            <person name="Utterback T.R."/>
            <person name="Rizzo M."/>
            <person name="Lee K."/>
            <person name="Kosack D."/>
            <person name="Moestl D."/>
            <person name="Wedler H."/>
            <person name="Lauber J."/>
            <person name="Stjepandic D."/>
            <person name="Hoheisel J."/>
            <person name="Straetz M."/>
            <person name="Heim S."/>
            <person name="Kiewitz C."/>
            <person name="Eisen J.A."/>
            <person name="Timmis K.N."/>
            <person name="Duesterhoeft A."/>
            <person name="Tuemmler B."/>
            <person name="Fraser C.M."/>
        </authorList>
    </citation>
    <scope>NUCLEOTIDE SEQUENCE [LARGE SCALE GENOMIC DNA]</scope>
    <source>
        <strain>ATCC 47054 / DSM 6125 / CFBP 8728 / NCIMB 11950 / KT2440</strain>
    </source>
</reference>
<name>GLGA_PSEPK</name>
<organism>
    <name type="scientific">Pseudomonas putida (strain ATCC 47054 / DSM 6125 / CFBP 8728 / NCIMB 11950 / KT2440)</name>
    <dbReference type="NCBI Taxonomy" id="160488"/>
    <lineage>
        <taxon>Bacteria</taxon>
        <taxon>Pseudomonadati</taxon>
        <taxon>Pseudomonadota</taxon>
        <taxon>Gammaproteobacteria</taxon>
        <taxon>Pseudomonadales</taxon>
        <taxon>Pseudomonadaceae</taxon>
        <taxon>Pseudomonas</taxon>
    </lineage>
</organism>
<dbReference type="EC" id="2.4.1.21" evidence="1"/>
<dbReference type="EMBL" id="AE015451">
    <property type="protein sequence ID" value="AAN69640.1"/>
    <property type="molecule type" value="Genomic_DNA"/>
</dbReference>
<dbReference type="RefSeq" id="NP_746176.1">
    <property type="nucleotide sequence ID" value="NC_002947.4"/>
</dbReference>
<dbReference type="RefSeq" id="WP_010954845.1">
    <property type="nucleotide sequence ID" value="NZ_CP169744.1"/>
</dbReference>
<dbReference type="SMR" id="Q88FN9"/>
<dbReference type="STRING" id="160488.PP_4050"/>
<dbReference type="CAZy" id="GT5">
    <property type="family name" value="Glycosyltransferase Family 5"/>
</dbReference>
<dbReference type="PaxDb" id="160488-PP_4050"/>
<dbReference type="GeneID" id="83679251"/>
<dbReference type="KEGG" id="ppu:PP_4050"/>
<dbReference type="PATRIC" id="fig|160488.4.peg.4303"/>
<dbReference type="eggNOG" id="COG0297">
    <property type="taxonomic scope" value="Bacteria"/>
</dbReference>
<dbReference type="HOGENOM" id="CLU_009583_18_4_6"/>
<dbReference type="OrthoDB" id="9808590at2"/>
<dbReference type="PhylomeDB" id="Q88FN9"/>
<dbReference type="BioCyc" id="PPUT160488:G1G01-4315-MONOMER"/>
<dbReference type="UniPathway" id="UPA00164"/>
<dbReference type="Proteomes" id="UP000000556">
    <property type="component" value="Chromosome"/>
</dbReference>
<dbReference type="GO" id="GO:0009011">
    <property type="term" value="F:alpha-1,4-glucan glucosyltransferase (ADP-glucose donor) activity"/>
    <property type="evidence" value="ECO:0007669"/>
    <property type="project" value="UniProtKB-UniRule"/>
</dbReference>
<dbReference type="GO" id="GO:0004373">
    <property type="term" value="F:alpha-1,4-glucan glucosyltransferase (UDP-glucose donor) activity"/>
    <property type="evidence" value="ECO:0007669"/>
    <property type="project" value="InterPro"/>
</dbReference>
<dbReference type="GO" id="GO:0005978">
    <property type="term" value="P:glycogen biosynthetic process"/>
    <property type="evidence" value="ECO:0007669"/>
    <property type="project" value="UniProtKB-UniRule"/>
</dbReference>
<dbReference type="CDD" id="cd03791">
    <property type="entry name" value="GT5_Glycogen_synthase_DULL1-like"/>
    <property type="match status" value="1"/>
</dbReference>
<dbReference type="Gene3D" id="3.40.50.2000">
    <property type="entry name" value="Glycogen Phosphorylase B"/>
    <property type="match status" value="2"/>
</dbReference>
<dbReference type="HAMAP" id="MF_00484">
    <property type="entry name" value="Glycogen_synth"/>
    <property type="match status" value="1"/>
</dbReference>
<dbReference type="InterPro" id="IPR001296">
    <property type="entry name" value="Glyco_trans_1"/>
</dbReference>
<dbReference type="InterPro" id="IPR011835">
    <property type="entry name" value="GS/SS"/>
</dbReference>
<dbReference type="InterPro" id="IPR013534">
    <property type="entry name" value="Starch_synth_cat_dom"/>
</dbReference>
<dbReference type="NCBIfam" id="TIGR02095">
    <property type="entry name" value="glgA"/>
    <property type="match status" value="1"/>
</dbReference>
<dbReference type="NCBIfam" id="NF001899">
    <property type="entry name" value="PRK00654.1-2"/>
    <property type="match status" value="1"/>
</dbReference>
<dbReference type="NCBIfam" id="NF001901">
    <property type="entry name" value="PRK00654.1-5"/>
    <property type="match status" value="1"/>
</dbReference>
<dbReference type="PANTHER" id="PTHR45825:SF8">
    <property type="entry name" value="GLYCOGEN SYNTHASE"/>
    <property type="match status" value="1"/>
</dbReference>
<dbReference type="PANTHER" id="PTHR45825">
    <property type="entry name" value="GRANULE-BOUND STARCH SYNTHASE 1, CHLOROPLASTIC/AMYLOPLASTIC"/>
    <property type="match status" value="1"/>
</dbReference>
<dbReference type="Pfam" id="PF08323">
    <property type="entry name" value="Glyco_transf_5"/>
    <property type="match status" value="1"/>
</dbReference>
<dbReference type="Pfam" id="PF00534">
    <property type="entry name" value="Glycos_transf_1"/>
    <property type="match status" value="1"/>
</dbReference>
<dbReference type="SUPFAM" id="SSF53756">
    <property type="entry name" value="UDP-Glycosyltransferase/glycogen phosphorylase"/>
    <property type="match status" value="1"/>
</dbReference>
<gene>
    <name evidence="1" type="primary">glgA</name>
    <name type="ordered locus">PP_4050</name>
</gene>
<evidence type="ECO:0000255" key="1">
    <source>
        <dbReference type="HAMAP-Rule" id="MF_00484"/>
    </source>
</evidence>
<evidence type="ECO:0000256" key="2">
    <source>
        <dbReference type="SAM" id="MobiDB-lite"/>
    </source>
</evidence>
<accession>Q88FN9</accession>
<proteinExistence type="inferred from homology"/>